<keyword id="KW-0028">Amino-acid biosynthesis</keyword>
<keyword id="KW-0963">Cytoplasm</keyword>
<keyword id="KW-0378">Hydrolase</keyword>
<keyword id="KW-0460">Magnesium</keyword>
<keyword id="KW-0479">Metal-binding</keyword>
<keyword id="KW-0486">Methionine biosynthesis</keyword>
<keyword id="KW-0539">Nucleus</keyword>
<keyword id="KW-1185">Reference proteome</keyword>
<organism>
    <name type="scientific">Kluyveromyces lactis (strain ATCC 8585 / CBS 2359 / DSM 70799 / NBRC 1267 / NRRL Y-1140 / WM37)</name>
    <name type="common">Yeast</name>
    <name type="synonym">Candida sphaerica</name>
    <dbReference type="NCBI Taxonomy" id="284590"/>
    <lineage>
        <taxon>Eukaryota</taxon>
        <taxon>Fungi</taxon>
        <taxon>Dikarya</taxon>
        <taxon>Ascomycota</taxon>
        <taxon>Saccharomycotina</taxon>
        <taxon>Saccharomycetes</taxon>
        <taxon>Saccharomycetales</taxon>
        <taxon>Saccharomycetaceae</taxon>
        <taxon>Kluyveromyces</taxon>
    </lineage>
</organism>
<comment type="function">
    <text evidence="1">Bifunctional enzyme that catalyzes the enolization of 2,3-diketo-5-methylthiopentyl-1-phosphate (DK-MTP-1-P) into the intermediate 2-hydroxy-3-keto-5-methylthiopentenyl-1-phosphate (HK-MTPenyl-1-P), which is then dephosphorylated to form the acireductone 1,2-dihydroxy-3-keto-5-methylthiopentene (DHK-MTPene).</text>
</comment>
<comment type="catalytic activity">
    <reaction evidence="1">
        <text>5-methylsulfanyl-2,3-dioxopentyl phosphate + H2O = 1,2-dihydroxy-5-(methylsulfanyl)pent-1-en-3-one + phosphate</text>
        <dbReference type="Rhea" id="RHEA:21700"/>
        <dbReference type="ChEBI" id="CHEBI:15377"/>
        <dbReference type="ChEBI" id="CHEBI:43474"/>
        <dbReference type="ChEBI" id="CHEBI:49252"/>
        <dbReference type="ChEBI" id="CHEBI:58828"/>
        <dbReference type="EC" id="3.1.3.77"/>
    </reaction>
</comment>
<comment type="cofactor">
    <cofactor evidence="1">
        <name>Mg(2+)</name>
        <dbReference type="ChEBI" id="CHEBI:18420"/>
    </cofactor>
    <text evidence="1">Binds 1 Mg(2+) ion per subunit.</text>
</comment>
<comment type="pathway">
    <text evidence="1">Amino-acid biosynthesis; L-methionine biosynthesis via salvage pathway; L-methionine from S-methyl-5-thio-alpha-D-ribose 1-phosphate: step 3/6.</text>
</comment>
<comment type="pathway">
    <text evidence="1">Amino-acid biosynthesis; L-methionine biosynthesis via salvage pathway; L-methionine from S-methyl-5-thio-alpha-D-ribose 1-phosphate: step 4/6.</text>
</comment>
<comment type="subunit">
    <text evidence="1">Monomer.</text>
</comment>
<comment type="subcellular location">
    <subcellularLocation>
        <location evidence="1">Cytoplasm</location>
    </subcellularLocation>
    <subcellularLocation>
        <location evidence="1">Nucleus</location>
    </subcellularLocation>
</comment>
<comment type="similarity">
    <text evidence="1">Belongs to the HAD-like hydrolase superfamily. MasA/MtnC family.</text>
</comment>
<proteinExistence type="inferred from homology"/>
<gene>
    <name evidence="1" type="primary">UTR4</name>
    <name type="ordered locus">KLLA0E22111g</name>
</gene>
<accession>Q6CM87</accession>
<sequence length="221" mass="24413">MSQLKYILDIEGTVCPISFVKDTLYPFFLKQVESLVKTNDPTLQNLLAQFPVPQDASSLHEHIESLVNNDIKDSVLKQLQGYIWEQGYKSGEIKAPVYPDAIDFIQRHAPNVYIYSSGSVKAQILLFQHVEGDIDLTKSIAGYFDINTSGKKTEPQSYTNILKSIGVPPSSASDVVFISDNDKELDAALDVGISTILALRPGNNPVSNAEKYKALNNFSSI</sequence>
<feature type="chain" id="PRO_0000394000" description="Enolase-phosphatase E1">
    <location>
        <begin position="1"/>
        <end position="221"/>
    </location>
</feature>
<feature type="binding site" evidence="1">
    <location>
        <position position="9"/>
    </location>
    <ligand>
        <name>Mg(2+)</name>
        <dbReference type="ChEBI" id="CHEBI:18420"/>
    </ligand>
</feature>
<feature type="binding site" evidence="1">
    <location>
        <position position="11"/>
    </location>
    <ligand>
        <name>Mg(2+)</name>
        <dbReference type="ChEBI" id="CHEBI:18420"/>
    </ligand>
</feature>
<feature type="binding site" evidence="1">
    <location>
        <begin position="116"/>
        <end position="117"/>
    </location>
    <ligand>
        <name>substrate</name>
    </ligand>
</feature>
<feature type="binding site" evidence="1">
    <location>
        <position position="152"/>
    </location>
    <ligand>
        <name>substrate</name>
    </ligand>
</feature>
<feature type="binding site" evidence="1">
    <location>
        <position position="180"/>
    </location>
    <ligand>
        <name>Mg(2+)</name>
        <dbReference type="ChEBI" id="CHEBI:18420"/>
    </ligand>
</feature>
<dbReference type="EC" id="3.1.3.77" evidence="1"/>
<dbReference type="EMBL" id="CR382125">
    <property type="protein sequence ID" value="CAH00039.1"/>
    <property type="molecule type" value="Genomic_DNA"/>
</dbReference>
<dbReference type="RefSeq" id="XP_454952.1">
    <property type="nucleotide sequence ID" value="XM_454952.1"/>
</dbReference>
<dbReference type="SMR" id="Q6CM87"/>
<dbReference type="FunCoup" id="Q6CM87">
    <property type="interactions" value="676"/>
</dbReference>
<dbReference type="STRING" id="284590.Q6CM87"/>
<dbReference type="PaxDb" id="284590-Q6CM87"/>
<dbReference type="KEGG" id="kla:KLLA0_E22111g"/>
<dbReference type="eggNOG" id="KOG2630">
    <property type="taxonomic scope" value="Eukaryota"/>
</dbReference>
<dbReference type="HOGENOM" id="CLU_023273_1_1_1"/>
<dbReference type="InParanoid" id="Q6CM87"/>
<dbReference type="OMA" id="LQGMVWE"/>
<dbReference type="UniPathway" id="UPA00904">
    <property type="reaction ID" value="UER00876"/>
</dbReference>
<dbReference type="UniPathway" id="UPA00904">
    <property type="reaction ID" value="UER00877"/>
</dbReference>
<dbReference type="Proteomes" id="UP000000598">
    <property type="component" value="Chromosome E"/>
</dbReference>
<dbReference type="GO" id="GO:0005737">
    <property type="term" value="C:cytoplasm"/>
    <property type="evidence" value="ECO:0007669"/>
    <property type="project" value="UniProtKB-SubCell"/>
</dbReference>
<dbReference type="GO" id="GO:0005634">
    <property type="term" value="C:nucleus"/>
    <property type="evidence" value="ECO:0007669"/>
    <property type="project" value="UniProtKB-SubCell"/>
</dbReference>
<dbReference type="GO" id="GO:0043874">
    <property type="term" value="F:acireductone synthase activity"/>
    <property type="evidence" value="ECO:0007669"/>
    <property type="project" value="UniProtKB-EC"/>
</dbReference>
<dbReference type="GO" id="GO:0000287">
    <property type="term" value="F:magnesium ion binding"/>
    <property type="evidence" value="ECO:0007669"/>
    <property type="project" value="UniProtKB-UniRule"/>
</dbReference>
<dbReference type="GO" id="GO:0019509">
    <property type="term" value="P:L-methionine salvage from methylthioadenosine"/>
    <property type="evidence" value="ECO:0007669"/>
    <property type="project" value="UniProtKB-UniRule"/>
</dbReference>
<dbReference type="CDD" id="cd01629">
    <property type="entry name" value="HAD_EP"/>
    <property type="match status" value="1"/>
</dbReference>
<dbReference type="Gene3D" id="1.10.720.60">
    <property type="match status" value="1"/>
</dbReference>
<dbReference type="Gene3D" id="3.40.50.1000">
    <property type="entry name" value="HAD superfamily/HAD-like"/>
    <property type="match status" value="1"/>
</dbReference>
<dbReference type="HAMAP" id="MF_03117">
    <property type="entry name" value="Salvage_MtnC_euk"/>
    <property type="match status" value="1"/>
</dbReference>
<dbReference type="InterPro" id="IPR023943">
    <property type="entry name" value="Enolase-ppase_E1"/>
</dbReference>
<dbReference type="InterPro" id="IPR027511">
    <property type="entry name" value="ENOPH1_eukaryotes"/>
</dbReference>
<dbReference type="InterPro" id="IPR036412">
    <property type="entry name" value="HAD-like_sf"/>
</dbReference>
<dbReference type="InterPro" id="IPR006439">
    <property type="entry name" value="HAD-SF_hydro_IA"/>
</dbReference>
<dbReference type="InterPro" id="IPR023214">
    <property type="entry name" value="HAD_sf"/>
</dbReference>
<dbReference type="NCBIfam" id="TIGR01691">
    <property type="entry name" value="enolase-ppase"/>
    <property type="match status" value="1"/>
</dbReference>
<dbReference type="NCBIfam" id="TIGR01549">
    <property type="entry name" value="HAD-SF-IA-v1"/>
    <property type="match status" value="1"/>
</dbReference>
<dbReference type="PANTHER" id="PTHR20371">
    <property type="entry name" value="ENOLASE-PHOSPHATASE E1"/>
    <property type="match status" value="1"/>
</dbReference>
<dbReference type="PANTHER" id="PTHR20371:SF1">
    <property type="entry name" value="ENOLASE-PHOSPHATASE E1"/>
    <property type="match status" value="1"/>
</dbReference>
<dbReference type="Pfam" id="PF00702">
    <property type="entry name" value="Hydrolase"/>
    <property type="match status" value="1"/>
</dbReference>
<dbReference type="SFLD" id="SFLDG01133">
    <property type="entry name" value="C1.5.4:_Enolase-phosphatase_Li"/>
    <property type="match status" value="1"/>
</dbReference>
<dbReference type="SFLD" id="SFLDS00003">
    <property type="entry name" value="Haloacid_Dehalogenase"/>
    <property type="match status" value="1"/>
</dbReference>
<dbReference type="SUPFAM" id="SSF56784">
    <property type="entry name" value="HAD-like"/>
    <property type="match status" value="1"/>
</dbReference>
<protein>
    <recommendedName>
        <fullName evidence="1">Enolase-phosphatase E1</fullName>
        <ecNumber evidence="1">3.1.3.77</ecNumber>
    </recommendedName>
    <alternativeName>
        <fullName evidence="1">2,3-diketo-5-methylthio-1-phosphopentane phosphatase</fullName>
    </alternativeName>
</protein>
<evidence type="ECO:0000255" key="1">
    <source>
        <dbReference type="HAMAP-Rule" id="MF_03117"/>
    </source>
</evidence>
<name>ENOPH_KLULA</name>
<reference key="1">
    <citation type="journal article" date="2004" name="Nature">
        <title>Genome evolution in yeasts.</title>
        <authorList>
            <person name="Dujon B."/>
            <person name="Sherman D."/>
            <person name="Fischer G."/>
            <person name="Durrens P."/>
            <person name="Casaregola S."/>
            <person name="Lafontaine I."/>
            <person name="de Montigny J."/>
            <person name="Marck C."/>
            <person name="Neuveglise C."/>
            <person name="Talla E."/>
            <person name="Goffard N."/>
            <person name="Frangeul L."/>
            <person name="Aigle M."/>
            <person name="Anthouard V."/>
            <person name="Babour A."/>
            <person name="Barbe V."/>
            <person name="Barnay S."/>
            <person name="Blanchin S."/>
            <person name="Beckerich J.-M."/>
            <person name="Beyne E."/>
            <person name="Bleykasten C."/>
            <person name="Boisrame A."/>
            <person name="Boyer J."/>
            <person name="Cattolico L."/>
            <person name="Confanioleri F."/>
            <person name="de Daruvar A."/>
            <person name="Despons L."/>
            <person name="Fabre E."/>
            <person name="Fairhead C."/>
            <person name="Ferry-Dumazet H."/>
            <person name="Groppi A."/>
            <person name="Hantraye F."/>
            <person name="Hennequin C."/>
            <person name="Jauniaux N."/>
            <person name="Joyet P."/>
            <person name="Kachouri R."/>
            <person name="Kerrest A."/>
            <person name="Koszul R."/>
            <person name="Lemaire M."/>
            <person name="Lesur I."/>
            <person name="Ma L."/>
            <person name="Muller H."/>
            <person name="Nicaud J.-M."/>
            <person name="Nikolski M."/>
            <person name="Oztas S."/>
            <person name="Ozier-Kalogeropoulos O."/>
            <person name="Pellenz S."/>
            <person name="Potier S."/>
            <person name="Richard G.-F."/>
            <person name="Straub M.-L."/>
            <person name="Suleau A."/>
            <person name="Swennen D."/>
            <person name="Tekaia F."/>
            <person name="Wesolowski-Louvel M."/>
            <person name="Westhof E."/>
            <person name="Wirth B."/>
            <person name="Zeniou-Meyer M."/>
            <person name="Zivanovic Y."/>
            <person name="Bolotin-Fukuhara M."/>
            <person name="Thierry A."/>
            <person name="Bouchier C."/>
            <person name="Caudron B."/>
            <person name="Scarpelli C."/>
            <person name="Gaillardin C."/>
            <person name="Weissenbach J."/>
            <person name="Wincker P."/>
            <person name="Souciet J.-L."/>
        </authorList>
    </citation>
    <scope>NUCLEOTIDE SEQUENCE [LARGE SCALE GENOMIC DNA]</scope>
    <source>
        <strain>ATCC 8585 / CBS 2359 / DSM 70799 / NBRC 1267 / NRRL Y-1140 / WM37</strain>
    </source>
</reference>